<comment type="function">
    <text evidence="1">Component of the SWR1 complex which mediates the ATP-dependent exchange of histone H2A for the H2A variant HZT1 leading to transcriptional regulation of selected genes by chromatin remodeling. Component of the NuA4 histone acetyltransferase complex which is involved in transcriptional activation of selected genes principally by acetylation of nucleosomal histones H4 and H2A. The NuA4 complex is also involved in DNA repair. Yaf9 may also be required for viability in conditions in which the structural integrity of the spindle is compromised (By similarity).</text>
</comment>
<comment type="subunit">
    <text evidence="1">Component of the SWR1 chromatin-remodeling complex and of the NuA4 histone acetyltransferase complex.</text>
</comment>
<comment type="subcellular location">
    <subcellularLocation>
        <location evidence="1">Cytoplasm</location>
    </subcellularLocation>
    <subcellularLocation>
        <location evidence="3">Nucleus</location>
    </subcellularLocation>
</comment>
<comment type="domain">
    <text evidence="1">The coiled-coil domain is required for assembly into the NuA4 complex.</text>
</comment>
<comment type="similarity">
    <text evidence="4">Belongs to the YAF9 family.</text>
</comment>
<reference key="1">
    <citation type="journal article" date="2004" name="Science">
        <title>The Ashbya gossypii genome as a tool for mapping the ancient Saccharomyces cerevisiae genome.</title>
        <authorList>
            <person name="Dietrich F.S."/>
            <person name="Voegeli S."/>
            <person name="Brachat S."/>
            <person name="Lerch A."/>
            <person name="Gates K."/>
            <person name="Steiner S."/>
            <person name="Mohr C."/>
            <person name="Poehlmann R."/>
            <person name="Luedi P."/>
            <person name="Choi S."/>
            <person name="Wing R.A."/>
            <person name="Flavier A."/>
            <person name="Gaffney T.D."/>
            <person name="Philippsen P."/>
        </authorList>
    </citation>
    <scope>NUCLEOTIDE SEQUENCE [LARGE SCALE GENOMIC DNA]</scope>
    <source>
        <strain>ATCC 10895 / CBS 109.51 / FGSC 9923 / NRRL Y-1056</strain>
    </source>
</reference>
<reference key="2">
    <citation type="journal article" date="2013" name="G3 (Bethesda)">
        <title>Genomes of Ashbya fungi isolated from insects reveal four mating-type loci, numerous translocations, lack of transposons, and distinct gene duplications.</title>
        <authorList>
            <person name="Dietrich F.S."/>
            <person name="Voegeli S."/>
            <person name="Kuo S."/>
            <person name="Philippsen P."/>
        </authorList>
    </citation>
    <scope>GENOME REANNOTATION</scope>
    <source>
        <strain>ATCC 10895 / CBS 109.51 / FGSC 9923 / NRRL Y-1056</strain>
    </source>
</reference>
<organism>
    <name type="scientific">Eremothecium gossypii (strain ATCC 10895 / CBS 109.51 / FGSC 9923 / NRRL Y-1056)</name>
    <name type="common">Yeast</name>
    <name type="synonym">Ashbya gossypii</name>
    <dbReference type="NCBI Taxonomy" id="284811"/>
    <lineage>
        <taxon>Eukaryota</taxon>
        <taxon>Fungi</taxon>
        <taxon>Dikarya</taxon>
        <taxon>Ascomycota</taxon>
        <taxon>Saccharomycotina</taxon>
        <taxon>Saccharomycetes</taxon>
        <taxon>Saccharomycetales</taxon>
        <taxon>Saccharomycetaceae</taxon>
        <taxon>Eremothecium</taxon>
    </lineage>
</organism>
<dbReference type="EMBL" id="AE016819">
    <property type="protein sequence ID" value="AAS53147.1"/>
    <property type="molecule type" value="Genomic_DNA"/>
</dbReference>
<dbReference type="RefSeq" id="NP_985323.1">
    <property type="nucleotide sequence ID" value="NM_210677.1"/>
</dbReference>
<dbReference type="SMR" id="Q755P0"/>
<dbReference type="FunCoup" id="Q755P0">
    <property type="interactions" value="775"/>
</dbReference>
<dbReference type="STRING" id="284811.Q755P0"/>
<dbReference type="EnsemblFungi" id="AAS53147">
    <property type="protein sequence ID" value="AAS53147"/>
    <property type="gene ID" value="AGOS_AFL227C"/>
</dbReference>
<dbReference type="GeneID" id="4621543"/>
<dbReference type="KEGG" id="ago:AGOS_AFL227C"/>
<dbReference type="eggNOG" id="KOG3149">
    <property type="taxonomic scope" value="Eukaryota"/>
</dbReference>
<dbReference type="HOGENOM" id="CLU_051385_2_1_1"/>
<dbReference type="InParanoid" id="Q755P0"/>
<dbReference type="OMA" id="VKPYHNE"/>
<dbReference type="OrthoDB" id="16041at2759"/>
<dbReference type="Proteomes" id="UP000000591">
    <property type="component" value="Chromosome VI"/>
</dbReference>
<dbReference type="GO" id="GO:0005737">
    <property type="term" value="C:cytoplasm"/>
    <property type="evidence" value="ECO:0007669"/>
    <property type="project" value="UniProtKB-SubCell"/>
</dbReference>
<dbReference type="GO" id="GO:0035267">
    <property type="term" value="C:NuA4 histone acetyltransferase complex"/>
    <property type="evidence" value="ECO:0000318"/>
    <property type="project" value="GO_Central"/>
</dbReference>
<dbReference type="GO" id="GO:0005634">
    <property type="term" value="C:nucleus"/>
    <property type="evidence" value="ECO:0000318"/>
    <property type="project" value="GO_Central"/>
</dbReference>
<dbReference type="GO" id="GO:0000812">
    <property type="term" value="C:Swr1 complex"/>
    <property type="evidence" value="ECO:0000318"/>
    <property type="project" value="GO_Central"/>
</dbReference>
<dbReference type="GO" id="GO:0042393">
    <property type="term" value="F:histone binding"/>
    <property type="evidence" value="ECO:0000318"/>
    <property type="project" value="GO_Central"/>
</dbReference>
<dbReference type="GO" id="GO:0006338">
    <property type="term" value="P:chromatin remodeling"/>
    <property type="evidence" value="ECO:0000318"/>
    <property type="project" value="GO_Central"/>
</dbReference>
<dbReference type="GO" id="GO:0006281">
    <property type="term" value="P:DNA repair"/>
    <property type="evidence" value="ECO:0007669"/>
    <property type="project" value="UniProtKB-KW"/>
</dbReference>
<dbReference type="GO" id="GO:0006357">
    <property type="term" value="P:regulation of transcription by RNA polymerase II"/>
    <property type="evidence" value="ECO:0000318"/>
    <property type="project" value="GO_Central"/>
</dbReference>
<dbReference type="CDD" id="cd16908">
    <property type="entry name" value="YEATS_Yaf9_like"/>
    <property type="match status" value="1"/>
</dbReference>
<dbReference type="FunFam" id="2.60.40.1970:FF:000007">
    <property type="entry name" value="Protein AF-9 homolog"/>
    <property type="match status" value="1"/>
</dbReference>
<dbReference type="Gene3D" id="2.60.40.1970">
    <property type="entry name" value="YEATS domain"/>
    <property type="match status" value="1"/>
</dbReference>
<dbReference type="InterPro" id="IPR038704">
    <property type="entry name" value="YEAST_sf"/>
</dbReference>
<dbReference type="InterPro" id="IPR005033">
    <property type="entry name" value="YEATS"/>
</dbReference>
<dbReference type="InterPro" id="IPR055129">
    <property type="entry name" value="YEATS_dom"/>
</dbReference>
<dbReference type="PANTHER" id="PTHR47573">
    <property type="entry name" value="PROTEIN AF-9 HOMOLOG"/>
    <property type="match status" value="1"/>
</dbReference>
<dbReference type="PANTHER" id="PTHR47573:SF1">
    <property type="entry name" value="PROTEIN AF-9 HOMOLOG"/>
    <property type="match status" value="1"/>
</dbReference>
<dbReference type="Pfam" id="PF03366">
    <property type="entry name" value="YEATS"/>
    <property type="match status" value="1"/>
</dbReference>
<dbReference type="PROSITE" id="PS51037">
    <property type="entry name" value="YEATS"/>
    <property type="match status" value="1"/>
</dbReference>
<gene>
    <name type="primary">YAF9</name>
    <name type="ordered locus">AFL227C</name>
</gene>
<keyword id="KW-0010">Activator</keyword>
<keyword id="KW-0156">Chromatin regulator</keyword>
<keyword id="KW-0175">Coiled coil</keyword>
<keyword id="KW-0963">Cytoplasm</keyword>
<keyword id="KW-0227">DNA damage</keyword>
<keyword id="KW-0234">DNA repair</keyword>
<keyword id="KW-0539">Nucleus</keyword>
<keyword id="KW-1185">Reference proteome</keyword>
<keyword id="KW-0804">Transcription</keyword>
<keyword id="KW-0805">Transcription regulation</keyword>
<evidence type="ECO:0000250" key="1"/>
<evidence type="ECO:0000255" key="2"/>
<evidence type="ECO:0000255" key="3">
    <source>
        <dbReference type="PROSITE-ProRule" id="PRU00376"/>
    </source>
</evidence>
<evidence type="ECO:0000305" key="4"/>
<feature type="chain" id="PRO_0000215922" description="Protein AF-9 homolog">
    <location>
        <begin position="1"/>
        <end position="208"/>
    </location>
</feature>
<feature type="domain" description="YEATS" evidence="3">
    <location>
        <begin position="8"/>
        <end position="157"/>
    </location>
</feature>
<feature type="coiled-coil region" evidence="2">
    <location>
        <begin position="176"/>
        <end position="208"/>
    </location>
</feature>
<name>AF9_EREGS</name>
<sequence>MAPAQAKRIKTLSVARPIVYGNTAKKMGDVRPAIAPSEHTHMWTIFVRGPQGEDISYFIKKVVFKLHETYPNPVRVVDAPPFELTETGWGEFEINVKVHFVDEANEKMLNFYHHLRLHPYTEEDGRRSDGDEVSSVFYDEIVFNEPNEAFFAKMIEQPGNLLPSNKTPDCVFSLQLEQEEIDRIQQGIGKVDEEIEQLKQKLEQDLAK</sequence>
<accession>Q755P0</accession>
<proteinExistence type="inferred from homology"/>
<protein>
    <recommendedName>
        <fullName>Protein AF-9 homolog</fullName>
    </recommendedName>
</protein>